<reference key="1">
    <citation type="journal article" date="2002" name="Nature">
        <title>Genome sequence of the plant pathogen Ralstonia solanacearum.</title>
        <authorList>
            <person name="Salanoubat M."/>
            <person name="Genin S."/>
            <person name="Artiguenave F."/>
            <person name="Gouzy J."/>
            <person name="Mangenot S."/>
            <person name="Arlat M."/>
            <person name="Billault A."/>
            <person name="Brottier P."/>
            <person name="Camus J.-C."/>
            <person name="Cattolico L."/>
            <person name="Chandler M."/>
            <person name="Choisne N."/>
            <person name="Claudel-Renard C."/>
            <person name="Cunnac S."/>
            <person name="Demange N."/>
            <person name="Gaspin C."/>
            <person name="Lavie M."/>
            <person name="Moisan A."/>
            <person name="Robert C."/>
            <person name="Saurin W."/>
            <person name="Schiex T."/>
            <person name="Siguier P."/>
            <person name="Thebault P."/>
            <person name="Whalen M."/>
            <person name="Wincker P."/>
            <person name="Levy M."/>
            <person name="Weissenbach J."/>
            <person name="Boucher C.A."/>
        </authorList>
    </citation>
    <scope>NUCLEOTIDE SEQUENCE [LARGE SCALE GENOMIC DNA]</scope>
    <source>
        <strain>ATCC BAA-1114 / GMI1000</strain>
    </source>
</reference>
<name>EPSF_RALN1</name>
<geneLocation type="plasmid">
    <name>megaplasmid Rsp</name>
</geneLocation>
<accession>P58595</accession>
<keyword id="KW-0997">Cell inner membrane</keyword>
<keyword id="KW-1003">Cell membrane</keyword>
<keyword id="KW-0472">Membrane</keyword>
<keyword id="KW-0614">Plasmid</keyword>
<keyword id="KW-0625">Polysaccharide transport</keyword>
<keyword id="KW-1185">Reference proteome</keyword>
<keyword id="KW-0762">Sugar transport</keyword>
<keyword id="KW-0812">Transmembrane</keyword>
<keyword id="KW-1133">Transmembrane helix</keyword>
<keyword id="KW-0813">Transport</keyword>
<keyword id="KW-0843">Virulence</keyword>
<evidence type="ECO:0000250" key="1"/>
<evidence type="ECO:0000255" key="2"/>
<evidence type="ECO:0000305" key="3"/>
<protein>
    <recommendedName>
        <fullName>EPS I polysaccharide export inner membrane protein EpsF</fullName>
    </recommendedName>
</protein>
<comment type="function">
    <text evidence="1">Probably involved in polymerization and/or export of exopolysaccharide EPS I which functions as a virulence factor. May play a role in export of EPS I or its intermediates across the membranes (By similarity).</text>
</comment>
<comment type="subcellular location">
    <subcellularLocation>
        <location evidence="3">Cell inner membrane</location>
        <topology evidence="3">Multi-pass membrane protein</topology>
    </subcellularLocation>
</comment>
<comment type="similarity">
    <text evidence="3">To S.marcescens SfuB.</text>
</comment>
<sequence>MKYSAPIRLNTLGAIASQHGVLVVIGMLLVVPMAFPLLPIIATYCAAIFVILLPLGRLQHVLATASSVAFAWLLTLRNPSKGLVEAGLGDDALHYMNAFYEFQQAYCCGPLDVLKTGIRSAGGGEPIFWFLSYSVAKLFDTPLLVWAVLIFISLMLAWIAIYRCSERFAYVVFVSYLSTITLYALQGSAIRQAVAAGLVMIALDLLIRRKLVSAAGVGLIAAGTHSSAAVVLLACAVVVLFLSRDYGMLARRSSGLGRVGRLIVLLALAAAGAVFGSAEFVMSKIQARLSESQTGSAWELQLAVEAVLACLFAWLLRIKLPREEKMAFLLFVVVCFSTSLFAPAVGARLFRYTYCFYIVYLCAFFFARQGESLGQKKTLASLLLLASFGWAIFIVSARYQGLFVSGGVIDHFLAGPFF</sequence>
<organism>
    <name type="scientific">Ralstonia nicotianae (strain ATCC BAA-1114 / GMI1000)</name>
    <name type="common">Ralstonia solanacearum</name>
    <dbReference type="NCBI Taxonomy" id="267608"/>
    <lineage>
        <taxon>Bacteria</taxon>
        <taxon>Pseudomonadati</taxon>
        <taxon>Pseudomonadota</taxon>
        <taxon>Betaproteobacteria</taxon>
        <taxon>Burkholderiales</taxon>
        <taxon>Burkholderiaceae</taxon>
        <taxon>Ralstonia</taxon>
        <taxon>Ralstonia solanacearum species complex</taxon>
    </lineage>
</organism>
<dbReference type="EMBL" id="AL646053">
    <property type="protein sequence ID" value="CAD18165.1"/>
    <property type="molecule type" value="Genomic_DNA"/>
</dbReference>
<dbReference type="RefSeq" id="WP_011004304.1">
    <property type="nucleotide sequence ID" value="NC_003296.1"/>
</dbReference>
<dbReference type="STRING" id="267608.RSp1014"/>
<dbReference type="EnsemblBacteria" id="CAD18165">
    <property type="protein sequence ID" value="CAD18165"/>
    <property type="gene ID" value="RSp1014"/>
</dbReference>
<dbReference type="KEGG" id="rso:RSp1014"/>
<dbReference type="HOGENOM" id="CLU_656996_0_0_4"/>
<dbReference type="Proteomes" id="UP000001436">
    <property type="component" value="Plasmid megaplasmid Rsp"/>
</dbReference>
<dbReference type="GO" id="GO:0005886">
    <property type="term" value="C:plasma membrane"/>
    <property type="evidence" value="ECO:0007669"/>
    <property type="project" value="UniProtKB-SubCell"/>
</dbReference>
<dbReference type="GO" id="GO:0015774">
    <property type="term" value="P:polysaccharide transport"/>
    <property type="evidence" value="ECO:0007669"/>
    <property type="project" value="UniProtKB-KW"/>
</dbReference>
<dbReference type="InterPro" id="IPR049458">
    <property type="entry name" value="EpsG-like"/>
</dbReference>
<dbReference type="Pfam" id="PF14897">
    <property type="entry name" value="EpsG"/>
    <property type="match status" value="1"/>
</dbReference>
<feature type="chain" id="PRO_0000086999" description="EPS I polysaccharide export inner membrane protein EpsF">
    <location>
        <begin position="1"/>
        <end position="418"/>
    </location>
</feature>
<feature type="transmembrane region" description="Helical" evidence="2">
    <location>
        <begin position="21"/>
        <end position="41"/>
    </location>
</feature>
<feature type="transmembrane region" description="Helical" evidence="2">
    <location>
        <begin position="45"/>
        <end position="65"/>
    </location>
</feature>
<feature type="transmembrane region" description="Helical" evidence="2">
    <location>
        <begin position="142"/>
        <end position="162"/>
    </location>
</feature>
<feature type="transmembrane region" description="Helical" evidence="2">
    <location>
        <begin position="170"/>
        <end position="190"/>
    </location>
</feature>
<feature type="transmembrane region" description="Helical" evidence="2">
    <location>
        <begin position="222"/>
        <end position="242"/>
    </location>
</feature>
<feature type="transmembrane region" description="Helical" evidence="2">
    <location>
        <begin position="262"/>
        <end position="282"/>
    </location>
</feature>
<feature type="transmembrane region" description="Helical" evidence="2">
    <location>
        <begin position="296"/>
        <end position="316"/>
    </location>
</feature>
<feature type="transmembrane region" description="Helical" evidence="2">
    <location>
        <begin position="326"/>
        <end position="346"/>
    </location>
</feature>
<feature type="transmembrane region" description="Helical" evidence="2">
    <location>
        <begin position="347"/>
        <end position="367"/>
    </location>
</feature>
<feature type="transmembrane region" description="Helical" evidence="2">
    <location>
        <begin position="377"/>
        <end position="397"/>
    </location>
</feature>
<gene>
    <name type="primary">epsF</name>
    <name type="ordered locus">RSp1014</name>
    <name type="ORF">RS02348</name>
</gene>
<proteinExistence type="inferred from homology"/>